<comment type="function">
    <text evidence="1">Basal body protein required in multiciliate cells to align and maintain cilia orientation in response to flow. May act by mediating a maturation step that stabilizes and aligns cilia orientation. Not required to respond to planar cell polarity (PCP) or flow-based orientation cues (By similarity).</text>
</comment>
<comment type="subcellular location">
    <subcellularLocation>
        <location evidence="1">Cytoplasm</location>
        <location evidence="1">Cytoskeleton</location>
        <location evidence="1">Cilium basal body</location>
    </subcellularLocation>
    <text evidence="1">Localizes to a polar structure adjacent to the basal body.</text>
</comment>
<comment type="similarity">
    <text evidence="5">Belongs to the BBOF1 family.</text>
</comment>
<comment type="sequence caution" evidence="5">
    <conflict type="erroneous initiation">
        <sequence resource="EMBL-CDS" id="AAI24394"/>
    </conflict>
    <text>Extended N-terminus.</text>
</comment>
<feature type="chain" id="PRO_0000281126" description="Basal body-orientation factor 1">
    <location>
        <begin position="1"/>
        <end position="520"/>
    </location>
</feature>
<feature type="region of interest" description="Disordered" evidence="4">
    <location>
        <begin position="1"/>
        <end position="34"/>
    </location>
</feature>
<feature type="region of interest" description="Disordered" evidence="4">
    <location>
        <begin position="468"/>
        <end position="492"/>
    </location>
</feature>
<feature type="coiled-coil region" evidence="3">
    <location>
        <begin position="27"/>
        <end position="175"/>
    </location>
</feature>
<feature type="coiled-coil region" evidence="3">
    <location>
        <begin position="245"/>
        <end position="386"/>
    </location>
</feature>
<feature type="compositionally biased region" description="Basic residues" evidence="4">
    <location>
        <begin position="1"/>
        <end position="21"/>
    </location>
</feature>
<feature type="compositionally biased region" description="Basic and acidic residues" evidence="4">
    <location>
        <begin position="22"/>
        <end position="34"/>
    </location>
</feature>
<feature type="compositionally biased region" description="Low complexity" evidence="4">
    <location>
        <begin position="469"/>
        <end position="478"/>
    </location>
</feature>
<feature type="compositionally biased region" description="Polar residues" evidence="4">
    <location>
        <begin position="479"/>
        <end position="492"/>
    </location>
</feature>
<reference key="1">
    <citation type="submission" date="2006-09" db="EMBL/GenBank/DDBJ databases">
        <authorList>
            <consortium name="NIH - Zebrafish Gene Collection (ZGC) project"/>
        </authorList>
    </citation>
    <scope>NUCLEOTIDE SEQUENCE [LARGE SCALE MRNA]</scope>
    <source>
        <tissue>Olfactory epithelium</tissue>
    </source>
</reference>
<sequence>MPKKKGKGKGKGKGKGKGKKDGKHDSKADRESEIEKLKSNASLWEAKFTVTDISRLEYREAARALAKANEELENQQYRAEKDTKDIIAFLKRTDFEKTATIAALEEELKRERAKSAQEKDLLVAEYMQKIDALEEMFRQRSGDFQRMQGELKTIKHYRKIKANLEEDLISIREKMYVDGRAHQESLARTEYKFYMARIRIEKEAEQKISQLAEQAHYEAVDQLGAASQTVITENIRLNEGLDYHVKEAEQLKRINVALTEKNSSLALFKETNELMKKEADSHVQSQHSEISELTAKLSTLEQALGIMSREFEQERVEMERSAGVNNTELEELEMLLAAREKELSKVKQLAQSIIEQRRELELFFHEALNHARKEIKAQQQHYRQEALKSYRWRMNEAHAGRLEFPRIRTFSNAPNSTNDVQTELEDSDKWNNLRSSNVDISDLTWEQKERLLNLLFAKLNGIKTRKAAHPPALSASSSEKIQVSSDAGSTVESPSMTFITQMTMANMTSDPFVLPALKST</sequence>
<organism>
    <name type="scientific">Danio rerio</name>
    <name type="common">Zebrafish</name>
    <name type="synonym">Brachydanio rerio</name>
    <dbReference type="NCBI Taxonomy" id="7955"/>
    <lineage>
        <taxon>Eukaryota</taxon>
        <taxon>Metazoa</taxon>
        <taxon>Chordata</taxon>
        <taxon>Craniata</taxon>
        <taxon>Vertebrata</taxon>
        <taxon>Euteleostomi</taxon>
        <taxon>Actinopterygii</taxon>
        <taxon>Neopterygii</taxon>
        <taxon>Teleostei</taxon>
        <taxon>Ostariophysi</taxon>
        <taxon>Cypriniformes</taxon>
        <taxon>Danionidae</taxon>
        <taxon>Danioninae</taxon>
        <taxon>Danio</taxon>
    </lineage>
</organism>
<evidence type="ECO:0000250" key="1">
    <source>
        <dbReference type="UniProtKB" id="A0JMY4"/>
    </source>
</evidence>
<evidence type="ECO:0000250" key="2">
    <source>
        <dbReference type="UniProtKB" id="Q8ND07"/>
    </source>
</evidence>
<evidence type="ECO:0000255" key="3"/>
<evidence type="ECO:0000256" key="4">
    <source>
        <dbReference type="SAM" id="MobiDB-lite"/>
    </source>
</evidence>
<evidence type="ECO:0000305" key="5"/>
<accession>Q08C53</accession>
<accession>A8Y5S8</accession>
<protein>
    <recommendedName>
        <fullName evidence="2">Basal body-orientation factor 1</fullName>
    </recommendedName>
    <alternativeName>
        <fullName>Coiled-coil domain-containing protein 176</fullName>
    </alternativeName>
</protein>
<proteinExistence type="evidence at transcript level"/>
<gene>
    <name evidence="2" type="primary">bbof1</name>
    <name type="synonym">ccdc176</name>
</gene>
<keyword id="KW-0966">Cell projection</keyword>
<keyword id="KW-0969">Cilium</keyword>
<keyword id="KW-0175">Coiled coil</keyword>
<keyword id="KW-0963">Cytoplasm</keyword>
<keyword id="KW-0206">Cytoskeleton</keyword>
<keyword id="KW-1185">Reference proteome</keyword>
<name>BBOF1_DANRE</name>
<dbReference type="EMBL" id="AL929282">
    <property type="protein sequence ID" value="CAP19603.1"/>
    <property type="molecule type" value="Genomic_DNA"/>
</dbReference>
<dbReference type="EMBL" id="BC124393">
    <property type="protein sequence ID" value="AAI24394.1"/>
    <property type="status" value="ALT_INIT"/>
    <property type="molecule type" value="mRNA"/>
</dbReference>
<dbReference type="SMR" id="Q08C53"/>
<dbReference type="FunCoup" id="Q08C53">
    <property type="interactions" value="32"/>
</dbReference>
<dbReference type="STRING" id="7955.ENSDARP00000090497"/>
<dbReference type="PaxDb" id="7955-ENSDARP00000090497"/>
<dbReference type="AGR" id="ZFIN:ZDB-GENE-081105-138"/>
<dbReference type="ZFIN" id="ZDB-GENE-081105-138">
    <property type="gene designation" value="bbof1a"/>
</dbReference>
<dbReference type="eggNOG" id="ENOG502QRCW">
    <property type="taxonomic scope" value="Eukaryota"/>
</dbReference>
<dbReference type="InParanoid" id="Q08C53"/>
<dbReference type="TreeFam" id="TF329828"/>
<dbReference type="PRO" id="PR:Q08C53"/>
<dbReference type="Proteomes" id="UP000000437">
    <property type="component" value="Unplaced"/>
</dbReference>
<dbReference type="GO" id="GO:0036064">
    <property type="term" value="C:ciliary basal body"/>
    <property type="evidence" value="ECO:0000250"/>
    <property type="project" value="UniProtKB"/>
</dbReference>
<dbReference type="GO" id="GO:0005737">
    <property type="term" value="C:cytoplasm"/>
    <property type="evidence" value="ECO:0007669"/>
    <property type="project" value="UniProtKB-KW"/>
</dbReference>
<dbReference type="GO" id="GO:0044458">
    <property type="term" value="P:motile cilium assembly"/>
    <property type="evidence" value="ECO:0000250"/>
    <property type="project" value="UniProtKB"/>
</dbReference>
<dbReference type="InterPro" id="IPR032777">
    <property type="entry name" value="DUF4515"/>
</dbReference>
<dbReference type="PANTHER" id="PTHR14845:SF5">
    <property type="entry name" value="BASAL BODY-ORIENTATION FACTOR 1"/>
    <property type="match status" value="1"/>
</dbReference>
<dbReference type="PANTHER" id="PTHR14845">
    <property type="entry name" value="COILED-COIL DOMAIN-CONTAINING 166"/>
    <property type="match status" value="1"/>
</dbReference>
<dbReference type="Pfam" id="PF14988">
    <property type="entry name" value="DUF4515"/>
    <property type="match status" value="1"/>
</dbReference>